<dbReference type="EC" id="5.3.1.1" evidence="1"/>
<dbReference type="EMBL" id="BA000022">
    <property type="protein sequence ID" value="BAA10145.1"/>
    <property type="molecule type" value="Genomic_DNA"/>
</dbReference>
<dbReference type="PIR" id="S76293">
    <property type="entry name" value="S76293"/>
</dbReference>
<dbReference type="PDB" id="6BVE">
    <property type="method" value="X-ray"/>
    <property type="resolution" value="1.78 A"/>
    <property type="chains" value="A/B=1-242"/>
</dbReference>
<dbReference type="PDBsum" id="6BVE"/>
<dbReference type="SMR" id="Q59994"/>
<dbReference type="FunCoup" id="Q59994">
    <property type="interactions" value="440"/>
</dbReference>
<dbReference type="STRING" id="1148.gene:10499638"/>
<dbReference type="PaxDb" id="1148-1001518"/>
<dbReference type="EnsemblBacteria" id="BAA10145">
    <property type="protein sequence ID" value="BAA10145"/>
    <property type="gene ID" value="BAA10145"/>
</dbReference>
<dbReference type="KEGG" id="syn:slr0783"/>
<dbReference type="eggNOG" id="COG0149">
    <property type="taxonomic scope" value="Bacteria"/>
</dbReference>
<dbReference type="InParanoid" id="Q59994"/>
<dbReference type="PhylomeDB" id="Q59994"/>
<dbReference type="UniPathway" id="UPA00109">
    <property type="reaction ID" value="UER00189"/>
</dbReference>
<dbReference type="UniPathway" id="UPA00138"/>
<dbReference type="Proteomes" id="UP000001425">
    <property type="component" value="Chromosome"/>
</dbReference>
<dbReference type="GO" id="GO:0005829">
    <property type="term" value="C:cytosol"/>
    <property type="evidence" value="ECO:0000318"/>
    <property type="project" value="GO_Central"/>
</dbReference>
<dbReference type="GO" id="GO:0004807">
    <property type="term" value="F:triose-phosphate isomerase activity"/>
    <property type="evidence" value="ECO:0000318"/>
    <property type="project" value="GO_Central"/>
</dbReference>
<dbReference type="GO" id="GO:0006094">
    <property type="term" value="P:gluconeogenesis"/>
    <property type="evidence" value="ECO:0000318"/>
    <property type="project" value="GO_Central"/>
</dbReference>
<dbReference type="GO" id="GO:0046166">
    <property type="term" value="P:glyceraldehyde-3-phosphate biosynthetic process"/>
    <property type="evidence" value="ECO:0000318"/>
    <property type="project" value="GO_Central"/>
</dbReference>
<dbReference type="GO" id="GO:0019563">
    <property type="term" value="P:glycerol catabolic process"/>
    <property type="evidence" value="ECO:0000318"/>
    <property type="project" value="GO_Central"/>
</dbReference>
<dbReference type="GO" id="GO:0006096">
    <property type="term" value="P:glycolytic process"/>
    <property type="evidence" value="ECO:0000318"/>
    <property type="project" value="GO_Central"/>
</dbReference>
<dbReference type="CDD" id="cd00311">
    <property type="entry name" value="TIM"/>
    <property type="match status" value="1"/>
</dbReference>
<dbReference type="FunFam" id="3.20.20.70:FF:000016">
    <property type="entry name" value="Triosephosphate isomerase"/>
    <property type="match status" value="1"/>
</dbReference>
<dbReference type="Gene3D" id="3.20.20.70">
    <property type="entry name" value="Aldolase class I"/>
    <property type="match status" value="1"/>
</dbReference>
<dbReference type="HAMAP" id="MF_00147_B">
    <property type="entry name" value="TIM_B"/>
    <property type="match status" value="1"/>
</dbReference>
<dbReference type="InterPro" id="IPR013785">
    <property type="entry name" value="Aldolase_TIM"/>
</dbReference>
<dbReference type="InterPro" id="IPR035990">
    <property type="entry name" value="TIM_sf"/>
</dbReference>
<dbReference type="InterPro" id="IPR022896">
    <property type="entry name" value="TrioseP_Isoase_bac/euk"/>
</dbReference>
<dbReference type="InterPro" id="IPR000652">
    <property type="entry name" value="Triosephosphate_isomerase"/>
</dbReference>
<dbReference type="InterPro" id="IPR020861">
    <property type="entry name" value="Triosephosphate_isomerase_AS"/>
</dbReference>
<dbReference type="NCBIfam" id="TIGR00419">
    <property type="entry name" value="tim"/>
    <property type="match status" value="1"/>
</dbReference>
<dbReference type="PANTHER" id="PTHR21139">
    <property type="entry name" value="TRIOSEPHOSPHATE ISOMERASE"/>
    <property type="match status" value="1"/>
</dbReference>
<dbReference type="PANTHER" id="PTHR21139:SF42">
    <property type="entry name" value="TRIOSEPHOSPHATE ISOMERASE"/>
    <property type="match status" value="1"/>
</dbReference>
<dbReference type="Pfam" id="PF00121">
    <property type="entry name" value="TIM"/>
    <property type="match status" value="1"/>
</dbReference>
<dbReference type="SUPFAM" id="SSF51351">
    <property type="entry name" value="Triosephosphate isomerase (TIM)"/>
    <property type="match status" value="1"/>
</dbReference>
<dbReference type="PROSITE" id="PS00171">
    <property type="entry name" value="TIM_1"/>
    <property type="match status" value="1"/>
</dbReference>
<dbReference type="PROSITE" id="PS51440">
    <property type="entry name" value="TIM_2"/>
    <property type="match status" value="1"/>
</dbReference>
<proteinExistence type="evidence at protein level"/>
<accession>Q59994</accession>
<name>TPIS_SYNY3</name>
<keyword id="KW-0002">3D-structure</keyword>
<keyword id="KW-0963">Cytoplasm</keyword>
<keyword id="KW-0312">Gluconeogenesis</keyword>
<keyword id="KW-0324">Glycolysis</keyword>
<keyword id="KW-0413">Isomerase</keyword>
<keyword id="KW-1185">Reference proteome</keyword>
<comment type="function">
    <text evidence="1">Involved in the gluconeogenesis. Catalyzes stereospecifically the conversion of dihydroxyacetone phosphate (DHAP) to D-glyceraldehyde-3-phosphate (G3P).</text>
</comment>
<comment type="catalytic activity">
    <reaction evidence="1">
        <text>D-glyceraldehyde 3-phosphate = dihydroxyacetone phosphate</text>
        <dbReference type="Rhea" id="RHEA:18585"/>
        <dbReference type="ChEBI" id="CHEBI:57642"/>
        <dbReference type="ChEBI" id="CHEBI:59776"/>
        <dbReference type="EC" id="5.3.1.1"/>
    </reaction>
</comment>
<comment type="pathway">
    <text evidence="1">Carbohydrate biosynthesis; gluconeogenesis.</text>
</comment>
<comment type="pathway">
    <text evidence="1">Carbohydrate degradation; glycolysis; D-glyceraldehyde 3-phosphate from glycerone phosphate: step 1/1.</text>
</comment>
<comment type="subunit">
    <text evidence="1">Homodimer.</text>
</comment>
<comment type="subcellular location">
    <subcellularLocation>
        <location evidence="1">Cytoplasm</location>
    </subcellularLocation>
</comment>
<comment type="similarity">
    <text evidence="1">Belongs to the triosephosphate isomerase family.</text>
</comment>
<evidence type="ECO:0000255" key="1">
    <source>
        <dbReference type="HAMAP-Rule" id="MF_00147"/>
    </source>
</evidence>
<evidence type="ECO:0007829" key="2">
    <source>
        <dbReference type="PDB" id="6BVE"/>
    </source>
</evidence>
<sequence>MRKIIIAGNWKMHKTQAEAQAFLQGFKPLIEDAAESREVVLCVPFTDLSGMSQQLHGGRVRLGAQNVHWEASGAYTGEISAAMLTEIGIHYVVIGHSERRQYFGETDETANLRVLAAQKAGLIPILCVGESKAQRDAGETEQVIVDQVKKGLVNVDQSNLVIAYEPIWAIGTGDTCAATEANRVIGLIREQLTNSQVTIQYGGSVNANNVDEIMAQPEIDGALVGGASLEPQSFARIVNFQP</sequence>
<reference key="1">
    <citation type="journal article" date="1995" name="DNA Res.">
        <title>Sequence analysis of the genome of the unicellular cyanobacterium Synechocystis sp. strain PCC6803. I. Sequence features in the 1 Mb region from map positions 64% to 92% of the genome.</title>
        <authorList>
            <person name="Kaneko T."/>
            <person name="Tanaka A."/>
            <person name="Sato S."/>
            <person name="Kotani H."/>
            <person name="Sazuka T."/>
            <person name="Miyajima N."/>
            <person name="Sugiura M."/>
            <person name="Tabata S."/>
        </authorList>
    </citation>
    <scope>NUCLEOTIDE SEQUENCE [LARGE SCALE GENOMIC DNA]</scope>
    <source>
        <strain>ATCC 27184 / PCC 6803 / N-1</strain>
    </source>
</reference>
<reference key="2">
    <citation type="journal article" date="1996" name="DNA Res.">
        <title>Sequence analysis of the genome of the unicellular cyanobacterium Synechocystis sp. strain PCC6803. II. Sequence determination of the entire genome and assignment of potential protein-coding regions.</title>
        <authorList>
            <person name="Kaneko T."/>
            <person name="Sato S."/>
            <person name="Kotani H."/>
            <person name="Tanaka A."/>
            <person name="Asamizu E."/>
            <person name="Nakamura Y."/>
            <person name="Miyajima N."/>
            <person name="Hirosawa M."/>
            <person name="Sugiura M."/>
            <person name="Sasamoto S."/>
            <person name="Kimura T."/>
            <person name="Hosouchi T."/>
            <person name="Matsuno A."/>
            <person name="Muraki A."/>
            <person name="Nakazaki N."/>
            <person name="Naruo K."/>
            <person name="Okumura S."/>
            <person name="Shimpo S."/>
            <person name="Takeuchi C."/>
            <person name="Wada T."/>
            <person name="Watanabe A."/>
            <person name="Yamada M."/>
            <person name="Yasuda M."/>
            <person name="Tabata S."/>
        </authorList>
    </citation>
    <scope>NUCLEOTIDE SEQUENCE [LARGE SCALE GENOMIC DNA]</scope>
    <source>
        <strain>ATCC 27184 / PCC 6803 / Kazusa</strain>
    </source>
</reference>
<gene>
    <name evidence="1" type="primary">tpiA</name>
    <name type="synonym">tpi</name>
    <name type="ordered locus">slr0783</name>
</gene>
<feature type="chain" id="PRO_0000090306" description="Triosephosphate isomerase">
    <location>
        <begin position="1"/>
        <end position="242"/>
    </location>
</feature>
<feature type="active site" description="Electrophile" evidence="1">
    <location>
        <position position="96"/>
    </location>
</feature>
<feature type="active site" description="Proton acceptor" evidence="1">
    <location>
        <position position="165"/>
    </location>
</feature>
<feature type="binding site" evidence="1">
    <location>
        <begin position="9"/>
        <end position="11"/>
    </location>
    <ligand>
        <name>substrate</name>
    </ligand>
</feature>
<feature type="binding site" evidence="1">
    <location>
        <position position="171"/>
    </location>
    <ligand>
        <name>substrate</name>
    </ligand>
</feature>
<feature type="binding site" evidence="1">
    <location>
        <position position="204"/>
    </location>
    <ligand>
        <name>substrate</name>
    </ligand>
</feature>
<feature type="binding site" evidence="1">
    <location>
        <begin position="225"/>
        <end position="226"/>
    </location>
    <ligand>
        <name>substrate</name>
    </ligand>
</feature>
<feature type="strand" evidence="2">
    <location>
        <begin position="5"/>
        <end position="9"/>
    </location>
</feature>
<feature type="helix" evidence="2">
    <location>
        <begin position="16"/>
        <end position="26"/>
    </location>
</feature>
<feature type="helix" evidence="2">
    <location>
        <begin position="27"/>
        <end position="30"/>
    </location>
</feature>
<feature type="strand" evidence="2">
    <location>
        <begin position="37"/>
        <end position="42"/>
    </location>
</feature>
<feature type="helix" evidence="2">
    <location>
        <begin position="45"/>
        <end position="47"/>
    </location>
</feature>
<feature type="helix" evidence="2">
    <location>
        <begin position="48"/>
        <end position="55"/>
    </location>
</feature>
<feature type="strand" evidence="2">
    <location>
        <begin position="61"/>
        <end position="65"/>
    </location>
</feature>
<feature type="strand" evidence="2">
    <location>
        <begin position="69"/>
        <end position="74"/>
    </location>
</feature>
<feature type="helix" evidence="2">
    <location>
        <begin position="81"/>
        <end position="87"/>
    </location>
</feature>
<feature type="strand" evidence="2">
    <location>
        <begin position="91"/>
        <end position="95"/>
    </location>
</feature>
<feature type="helix" evidence="2">
    <location>
        <begin position="97"/>
        <end position="102"/>
    </location>
</feature>
<feature type="helix" evidence="2">
    <location>
        <begin position="107"/>
        <end position="119"/>
    </location>
</feature>
<feature type="strand" evidence="2">
    <location>
        <begin position="123"/>
        <end position="128"/>
    </location>
</feature>
<feature type="helix" evidence="2">
    <location>
        <begin position="132"/>
        <end position="136"/>
    </location>
</feature>
<feature type="helix" evidence="2">
    <location>
        <begin position="140"/>
        <end position="151"/>
    </location>
</feature>
<feature type="turn" evidence="2">
    <location>
        <begin position="152"/>
        <end position="154"/>
    </location>
</feature>
<feature type="strand" evidence="2">
    <location>
        <begin position="161"/>
        <end position="164"/>
    </location>
</feature>
<feature type="helix" evidence="2">
    <location>
        <begin position="167"/>
        <end position="169"/>
    </location>
</feature>
<feature type="turn" evidence="2">
    <location>
        <begin position="170"/>
        <end position="172"/>
    </location>
</feature>
<feature type="helix" evidence="2">
    <location>
        <begin position="178"/>
        <end position="191"/>
    </location>
</feature>
<feature type="strand" evidence="2">
    <location>
        <begin position="198"/>
        <end position="204"/>
    </location>
</feature>
<feature type="turn" evidence="2">
    <location>
        <begin position="207"/>
        <end position="209"/>
    </location>
</feature>
<feature type="helix" evidence="2">
    <location>
        <begin position="210"/>
        <end position="214"/>
    </location>
</feature>
<feature type="strand" evidence="2">
    <location>
        <begin position="221"/>
        <end position="225"/>
    </location>
</feature>
<feature type="helix" evidence="2">
    <location>
        <begin position="226"/>
        <end position="228"/>
    </location>
</feature>
<feature type="helix" evidence="2">
    <location>
        <begin position="231"/>
        <end position="238"/>
    </location>
</feature>
<organism>
    <name type="scientific">Synechocystis sp. (strain ATCC 27184 / PCC 6803 / Kazusa)</name>
    <dbReference type="NCBI Taxonomy" id="1111708"/>
    <lineage>
        <taxon>Bacteria</taxon>
        <taxon>Bacillati</taxon>
        <taxon>Cyanobacteriota</taxon>
        <taxon>Cyanophyceae</taxon>
        <taxon>Synechococcales</taxon>
        <taxon>Merismopediaceae</taxon>
        <taxon>Synechocystis</taxon>
    </lineage>
</organism>
<protein>
    <recommendedName>
        <fullName evidence="1">Triosephosphate isomerase</fullName>
        <shortName evidence="1">TIM</shortName>
        <shortName evidence="1">TPI</shortName>
        <ecNumber evidence="1">5.3.1.1</ecNumber>
    </recommendedName>
    <alternativeName>
        <fullName evidence="1">Triose-phosphate isomerase</fullName>
    </alternativeName>
</protein>